<name>RL1_AQUPY</name>
<dbReference type="EMBL" id="AF027501">
    <property type="protein sequence ID" value="AAB84037.1"/>
    <property type="molecule type" value="Genomic_DNA"/>
</dbReference>
<dbReference type="SMR" id="Q9XDM1"/>
<dbReference type="GO" id="GO:1990904">
    <property type="term" value="C:ribonucleoprotein complex"/>
    <property type="evidence" value="ECO:0007669"/>
    <property type="project" value="UniProtKB-KW"/>
</dbReference>
<dbReference type="GO" id="GO:0005840">
    <property type="term" value="C:ribosome"/>
    <property type="evidence" value="ECO:0007669"/>
    <property type="project" value="UniProtKB-KW"/>
</dbReference>
<dbReference type="GO" id="GO:0019843">
    <property type="term" value="F:rRNA binding"/>
    <property type="evidence" value="ECO:0007669"/>
    <property type="project" value="UniProtKB-KW"/>
</dbReference>
<dbReference type="GO" id="GO:0000049">
    <property type="term" value="F:tRNA binding"/>
    <property type="evidence" value="ECO:0007669"/>
    <property type="project" value="UniProtKB-KW"/>
</dbReference>
<dbReference type="GO" id="GO:0006417">
    <property type="term" value="P:regulation of translation"/>
    <property type="evidence" value="ECO:0007669"/>
    <property type="project" value="UniProtKB-KW"/>
</dbReference>
<dbReference type="CDD" id="cd00403">
    <property type="entry name" value="Ribosomal_L1"/>
    <property type="match status" value="1"/>
</dbReference>
<dbReference type="Gene3D" id="3.30.190.20">
    <property type="match status" value="1"/>
</dbReference>
<dbReference type="Gene3D" id="3.40.50.790">
    <property type="match status" value="1"/>
</dbReference>
<dbReference type="InterPro" id="IPR023674">
    <property type="entry name" value="Ribosomal_uL1-like"/>
</dbReference>
<dbReference type="InterPro" id="IPR028364">
    <property type="entry name" value="Ribosomal_uL1/biogenesis"/>
</dbReference>
<dbReference type="InterPro" id="IPR016095">
    <property type="entry name" value="Ribosomal_uL1_3-a/b-sand"/>
</dbReference>
<dbReference type="PANTHER" id="PTHR36427">
    <property type="entry name" value="54S RIBOSOMAL PROTEIN L1, MITOCHONDRIAL"/>
    <property type="match status" value="1"/>
</dbReference>
<dbReference type="PANTHER" id="PTHR36427:SF3">
    <property type="entry name" value="LARGE RIBOSOMAL SUBUNIT PROTEIN UL1M"/>
    <property type="match status" value="1"/>
</dbReference>
<dbReference type="Pfam" id="PF00687">
    <property type="entry name" value="Ribosomal_L1"/>
    <property type="match status" value="1"/>
</dbReference>
<dbReference type="SUPFAM" id="SSF56808">
    <property type="entry name" value="Ribosomal protein L1"/>
    <property type="match status" value="1"/>
</dbReference>
<organism>
    <name type="scientific">Aquifex pyrophilus</name>
    <dbReference type="NCBI Taxonomy" id="2714"/>
    <lineage>
        <taxon>Bacteria</taxon>
        <taxon>Pseudomonadati</taxon>
        <taxon>Aquificota</taxon>
        <taxon>Aquificia</taxon>
        <taxon>Aquificales</taxon>
        <taxon>Aquificaceae</taxon>
        <taxon>Aquifex</taxon>
    </lineage>
</organism>
<reference key="1">
    <citation type="journal article" date="1999" name="J. Mol. Evol.">
        <title>RNA polymerase of Aquifex pyrophilus: implications for the evolution of the bacterial rpoBC operon and extremely thermophilic bacteria.</title>
        <authorList>
            <person name="Klenk H.-P."/>
            <person name="Meier T.D."/>
            <person name="Durovic P."/>
            <person name="Schwass V."/>
            <person name="Lottspeich F."/>
            <person name="Dennis P.P."/>
            <person name="Zillig W."/>
        </authorList>
    </citation>
    <scope>NUCLEOTIDE SEQUENCE [GENOMIC DNA]</scope>
    <source>
        <strain>DSM 6858 / JCM 9492 / Kol5A</strain>
    </source>
</reference>
<accession>Q9XDM1</accession>
<sequence length="109" mass="11795">ILGPRGLMPSPKTGTVTKNVEQAIKDAKRGRVEFKVDKAGNIHMPVGKVSFDKAKLLDNIYAAIDAVVRAKPPGAKGQYVKNIALSLTMSPSVKIDINETLRKLQERAA</sequence>
<evidence type="ECO:0000250" key="1"/>
<evidence type="ECO:0000305" key="2"/>
<protein>
    <recommendedName>
        <fullName evidence="2">Large ribosomal subunit protein uL1</fullName>
    </recommendedName>
    <alternativeName>
        <fullName>50S ribosomal protein L1</fullName>
    </alternativeName>
</protein>
<gene>
    <name type="primary">rplA</name>
</gene>
<feature type="chain" id="PRO_0000125606" description="Large ribosomal subunit protein uL1">
    <location>
        <begin position="1" status="less than"/>
        <end position="109"/>
    </location>
</feature>
<feature type="non-terminal residue">
    <location>
        <position position="1"/>
    </location>
</feature>
<proteinExistence type="inferred from homology"/>
<comment type="function">
    <text evidence="1">Binds directly to 23S rRNA. The L1 stalk is quite mobile in the ribosome, and is involved in E site tRNA release (By similarity).</text>
</comment>
<comment type="function">
    <text evidence="1">Protein L1 is also a translational repressor protein, it controls the translation of the L11 operon by binding to its mRNA.</text>
</comment>
<comment type="subunit">
    <text evidence="1">Part of the 50S ribosomal subunit.</text>
</comment>
<comment type="similarity">
    <text evidence="2">Belongs to the universal ribosomal protein uL1 family.</text>
</comment>
<keyword id="KW-0678">Repressor</keyword>
<keyword id="KW-0687">Ribonucleoprotein</keyword>
<keyword id="KW-0689">Ribosomal protein</keyword>
<keyword id="KW-0694">RNA-binding</keyword>
<keyword id="KW-0699">rRNA-binding</keyword>
<keyword id="KW-0810">Translation regulation</keyword>
<keyword id="KW-0820">tRNA-binding</keyword>